<keyword id="KW-0030">Aminoacyl-tRNA synthetase</keyword>
<keyword id="KW-0067">ATP-binding</keyword>
<keyword id="KW-0963">Cytoplasm</keyword>
<keyword id="KW-0436">Ligase</keyword>
<keyword id="KW-0479">Metal-binding</keyword>
<keyword id="KW-0547">Nucleotide-binding</keyword>
<keyword id="KW-0648">Protein biosynthesis</keyword>
<keyword id="KW-0694">RNA-binding</keyword>
<keyword id="KW-0820">tRNA-binding</keyword>
<keyword id="KW-0862">Zinc</keyword>
<feature type="chain" id="PRO_1000098607" description="Threonine--tRNA ligase">
    <location>
        <begin position="1"/>
        <end position="642"/>
    </location>
</feature>
<feature type="domain" description="TGS" evidence="2">
    <location>
        <begin position="1"/>
        <end position="61"/>
    </location>
</feature>
<feature type="region of interest" description="Catalytic" evidence="1">
    <location>
        <begin position="243"/>
        <end position="534"/>
    </location>
</feature>
<feature type="binding site" evidence="1">
    <location>
        <position position="334"/>
    </location>
    <ligand>
        <name>Zn(2+)</name>
        <dbReference type="ChEBI" id="CHEBI:29105"/>
    </ligand>
</feature>
<feature type="binding site" evidence="1">
    <location>
        <position position="385"/>
    </location>
    <ligand>
        <name>Zn(2+)</name>
        <dbReference type="ChEBI" id="CHEBI:29105"/>
    </ligand>
</feature>
<feature type="binding site" evidence="1">
    <location>
        <position position="511"/>
    </location>
    <ligand>
        <name>Zn(2+)</name>
        <dbReference type="ChEBI" id="CHEBI:29105"/>
    </ligand>
</feature>
<gene>
    <name evidence="1" type="primary">thrS</name>
    <name type="ordered locus">SEN1711</name>
</gene>
<proteinExistence type="inferred from homology"/>
<comment type="function">
    <text evidence="1">Catalyzes the attachment of threonine to tRNA(Thr) in a two-step reaction: L-threonine is first activated by ATP to form Thr-AMP and then transferred to the acceptor end of tRNA(Thr). Also edits incorrectly charged L-seryl-tRNA(Thr).</text>
</comment>
<comment type="catalytic activity">
    <reaction evidence="1">
        <text>tRNA(Thr) + L-threonine + ATP = L-threonyl-tRNA(Thr) + AMP + diphosphate + H(+)</text>
        <dbReference type="Rhea" id="RHEA:24624"/>
        <dbReference type="Rhea" id="RHEA-COMP:9670"/>
        <dbReference type="Rhea" id="RHEA-COMP:9704"/>
        <dbReference type="ChEBI" id="CHEBI:15378"/>
        <dbReference type="ChEBI" id="CHEBI:30616"/>
        <dbReference type="ChEBI" id="CHEBI:33019"/>
        <dbReference type="ChEBI" id="CHEBI:57926"/>
        <dbReference type="ChEBI" id="CHEBI:78442"/>
        <dbReference type="ChEBI" id="CHEBI:78534"/>
        <dbReference type="ChEBI" id="CHEBI:456215"/>
        <dbReference type="EC" id="6.1.1.3"/>
    </reaction>
</comment>
<comment type="cofactor">
    <cofactor evidence="1">
        <name>Zn(2+)</name>
        <dbReference type="ChEBI" id="CHEBI:29105"/>
    </cofactor>
    <text evidence="1">Binds 1 zinc ion per subunit.</text>
</comment>
<comment type="subunit">
    <text evidence="1">Homodimer.</text>
</comment>
<comment type="subcellular location">
    <subcellularLocation>
        <location evidence="1">Cytoplasm</location>
    </subcellularLocation>
</comment>
<comment type="similarity">
    <text evidence="1">Belongs to the class-II aminoacyl-tRNA synthetase family.</text>
</comment>
<organism>
    <name type="scientific">Salmonella enteritidis PT4 (strain P125109)</name>
    <dbReference type="NCBI Taxonomy" id="550537"/>
    <lineage>
        <taxon>Bacteria</taxon>
        <taxon>Pseudomonadati</taxon>
        <taxon>Pseudomonadota</taxon>
        <taxon>Gammaproteobacteria</taxon>
        <taxon>Enterobacterales</taxon>
        <taxon>Enterobacteriaceae</taxon>
        <taxon>Salmonella</taxon>
    </lineage>
</organism>
<sequence>MPVITLPDGSQRHYDHPVSPMDVALDIGPGLAKATIAGRVNGELVDASDLIENDATLAIITAKDEEGLEIIRHSCAHLLGHAIKQLWPHTKMAIGPVVDNGFYYDVDLDRTLTQEDVEALEKRMHELAEKNYDVIKKKVSWHDARETFVKRGETYKVAILDENIAHDDKPGLYHHEEYVDMCRGPHVPNMRFCHHFKLMKTAGAYWRGDSNNKMLQRIYGTAWADKKALNAYLQRLEEAAKRDHRKIGKQLDLYHMQEEAPGMVFWHNDGWTIFRELEVFVRSKLKEYQYQEVKGPFMMDRVLWEKTGHWDNYKDAMFTTSSENREYCIKPMNCPGHVQIFNQGLKSYRDLPLRMAEFGSCHRNEPSGALHGLMRVRGFTQDDAHIFCTEEQIRDEVNACIRMVYDMYSTFGFEKIVVKLSTRPDKRIGSDEMWDRAEADLAVALEENNIPFEYQLGEGAFYGPKIEFTLYDCLDRAWQCGTVQLDFSLPSRLSASYVGEDNERKVPVMIHRAILGSMERFIGILTEEFAGFFPTWLAPVQVVVMNITDSQSEYVNELTQKLQNAGIRVKADLRNEKIGFKIREHTLRRVPYMLVCGDKEVEAGKVAVRTRRGKDLGSLDVNDVIEKLQQEIRSRSLQQLEE</sequence>
<name>SYT_SALEP</name>
<evidence type="ECO:0000255" key="1">
    <source>
        <dbReference type="HAMAP-Rule" id="MF_00184"/>
    </source>
</evidence>
<evidence type="ECO:0000255" key="2">
    <source>
        <dbReference type="PROSITE-ProRule" id="PRU01228"/>
    </source>
</evidence>
<protein>
    <recommendedName>
        <fullName evidence="1">Threonine--tRNA ligase</fullName>
        <ecNumber evidence="1">6.1.1.3</ecNumber>
    </recommendedName>
    <alternativeName>
        <fullName evidence="1">Threonyl-tRNA synthetase</fullName>
        <shortName evidence="1">ThrRS</shortName>
    </alternativeName>
</protein>
<reference key="1">
    <citation type="journal article" date="2008" name="Genome Res.">
        <title>Comparative genome analysis of Salmonella enteritidis PT4 and Salmonella gallinarum 287/91 provides insights into evolutionary and host adaptation pathways.</title>
        <authorList>
            <person name="Thomson N.R."/>
            <person name="Clayton D.J."/>
            <person name="Windhorst D."/>
            <person name="Vernikos G."/>
            <person name="Davidson S."/>
            <person name="Churcher C."/>
            <person name="Quail M.A."/>
            <person name="Stevens M."/>
            <person name="Jones M.A."/>
            <person name="Watson M."/>
            <person name="Barron A."/>
            <person name="Layton A."/>
            <person name="Pickard D."/>
            <person name="Kingsley R.A."/>
            <person name="Bignell A."/>
            <person name="Clark L."/>
            <person name="Harris B."/>
            <person name="Ormond D."/>
            <person name="Abdellah Z."/>
            <person name="Brooks K."/>
            <person name="Cherevach I."/>
            <person name="Chillingworth T."/>
            <person name="Woodward J."/>
            <person name="Norberczak H."/>
            <person name="Lord A."/>
            <person name="Arrowsmith C."/>
            <person name="Jagels K."/>
            <person name="Moule S."/>
            <person name="Mungall K."/>
            <person name="Saunders M."/>
            <person name="Whitehead S."/>
            <person name="Chabalgoity J.A."/>
            <person name="Maskell D."/>
            <person name="Humphreys T."/>
            <person name="Roberts M."/>
            <person name="Barrow P.A."/>
            <person name="Dougan G."/>
            <person name="Parkhill J."/>
        </authorList>
    </citation>
    <scope>NUCLEOTIDE SEQUENCE [LARGE SCALE GENOMIC DNA]</scope>
    <source>
        <strain>P125109</strain>
    </source>
</reference>
<accession>B5QVW8</accession>
<dbReference type="EC" id="6.1.1.3" evidence="1"/>
<dbReference type="EMBL" id="AM933172">
    <property type="protein sequence ID" value="CAR33293.1"/>
    <property type="molecule type" value="Genomic_DNA"/>
</dbReference>
<dbReference type="RefSeq" id="WP_001144217.1">
    <property type="nucleotide sequence ID" value="NC_011294.1"/>
</dbReference>
<dbReference type="SMR" id="B5QVW8"/>
<dbReference type="KEGG" id="set:SEN1711"/>
<dbReference type="HOGENOM" id="CLU_008554_0_1_6"/>
<dbReference type="Proteomes" id="UP000000613">
    <property type="component" value="Chromosome"/>
</dbReference>
<dbReference type="GO" id="GO:0005829">
    <property type="term" value="C:cytosol"/>
    <property type="evidence" value="ECO:0007669"/>
    <property type="project" value="TreeGrafter"/>
</dbReference>
<dbReference type="GO" id="GO:0005524">
    <property type="term" value="F:ATP binding"/>
    <property type="evidence" value="ECO:0007669"/>
    <property type="project" value="UniProtKB-UniRule"/>
</dbReference>
<dbReference type="GO" id="GO:0046872">
    <property type="term" value="F:metal ion binding"/>
    <property type="evidence" value="ECO:0007669"/>
    <property type="project" value="UniProtKB-KW"/>
</dbReference>
<dbReference type="GO" id="GO:0004829">
    <property type="term" value="F:threonine-tRNA ligase activity"/>
    <property type="evidence" value="ECO:0007669"/>
    <property type="project" value="UniProtKB-UniRule"/>
</dbReference>
<dbReference type="GO" id="GO:0000049">
    <property type="term" value="F:tRNA binding"/>
    <property type="evidence" value="ECO:0007669"/>
    <property type="project" value="UniProtKB-KW"/>
</dbReference>
<dbReference type="GO" id="GO:0006435">
    <property type="term" value="P:threonyl-tRNA aminoacylation"/>
    <property type="evidence" value="ECO:0007669"/>
    <property type="project" value="UniProtKB-UniRule"/>
</dbReference>
<dbReference type="CDD" id="cd01667">
    <property type="entry name" value="TGS_ThrRS"/>
    <property type="match status" value="1"/>
</dbReference>
<dbReference type="CDD" id="cd00860">
    <property type="entry name" value="ThrRS_anticodon"/>
    <property type="match status" value="1"/>
</dbReference>
<dbReference type="CDD" id="cd00771">
    <property type="entry name" value="ThrRS_core"/>
    <property type="match status" value="1"/>
</dbReference>
<dbReference type="FunFam" id="3.10.20.30:FF:000005">
    <property type="entry name" value="Threonine--tRNA ligase"/>
    <property type="match status" value="1"/>
</dbReference>
<dbReference type="FunFam" id="3.30.54.20:FF:000002">
    <property type="entry name" value="Threonine--tRNA ligase"/>
    <property type="match status" value="1"/>
</dbReference>
<dbReference type="FunFam" id="3.30.930.10:FF:000002">
    <property type="entry name" value="Threonine--tRNA ligase"/>
    <property type="match status" value="1"/>
</dbReference>
<dbReference type="FunFam" id="3.40.50.800:FF:000001">
    <property type="entry name" value="Threonine--tRNA ligase"/>
    <property type="match status" value="1"/>
</dbReference>
<dbReference type="FunFam" id="3.30.980.10:FF:000005">
    <property type="entry name" value="Threonyl-tRNA synthetase, mitochondrial"/>
    <property type="match status" value="1"/>
</dbReference>
<dbReference type="Gene3D" id="3.10.20.30">
    <property type="match status" value="1"/>
</dbReference>
<dbReference type="Gene3D" id="3.30.54.20">
    <property type="match status" value="1"/>
</dbReference>
<dbReference type="Gene3D" id="3.40.50.800">
    <property type="entry name" value="Anticodon-binding domain"/>
    <property type="match status" value="1"/>
</dbReference>
<dbReference type="Gene3D" id="3.30.930.10">
    <property type="entry name" value="Bira Bifunctional Protein, Domain 2"/>
    <property type="match status" value="1"/>
</dbReference>
<dbReference type="Gene3D" id="3.30.980.10">
    <property type="entry name" value="Threonyl-trna Synthetase, Chain A, domain 2"/>
    <property type="match status" value="1"/>
</dbReference>
<dbReference type="HAMAP" id="MF_00184">
    <property type="entry name" value="Thr_tRNA_synth"/>
    <property type="match status" value="1"/>
</dbReference>
<dbReference type="InterPro" id="IPR002314">
    <property type="entry name" value="aa-tRNA-synt_IIb"/>
</dbReference>
<dbReference type="InterPro" id="IPR006195">
    <property type="entry name" value="aa-tRNA-synth_II"/>
</dbReference>
<dbReference type="InterPro" id="IPR045864">
    <property type="entry name" value="aa-tRNA-synth_II/BPL/LPL"/>
</dbReference>
<dbReference type="InterPro" id="IPR004154">
    <property type="entry name" value="Anticodon-bd"/>
</dbReference>
<dbReference type="InterPro" id="IPR036621">
    <property type="entry name" value="Anticodon-bd_dom_sf"/>
</dbReference>
<dbReference type="InterPro" id="IPR012675">
    <property type="entry name" value="Beta-grasp_dom_sf"/>
</dbReference>
<dbReference type="InterPro" id="IPR004095">
    <property type="entry name" value="TGS"/>
</dbReference>
<dbReference type="InterPro" id="IPR012676">
    <property type="entry name" value="TGS-like"/>
</dbReference>
<dbReference type="InterPro" id="IPR002320">
    <property type="entry name" value="Thr-tRNA-ligase_IIa"/>
</dbReference>
<dbReference type="InterPro" id="IPR018163">
    <property type="entry name" value="Thr/Ala-tRNA-synth_IIc_edit"/>
</dbReference>
<dbReference type="InterPro" id="IPR047246">
    <property type="entry name" value="ThrRS_anticodon"/>
</dbReference>
<dbReference type="InterPro" id="IPR033728">
    <property type="entry name" value="ThrRS_core"/>
</dbReference>
<dbReference type="InterPro" id="IPR012947">
    <property type="entry name" value="tRNA_SAD"/>
</dbReference>
<dbReference type="NCBIfam" id="TIGR00418">
    <property type="entry name" value="thrS"/>
    <property type="match status" value="1"/>
</dbReference>
<dbReference type="PANTHER" id="PTHR11451:SF44">
    <property type="entry name" value="THREONINE--TRNA LIGASE, CHLOROPLASTIC_MITOCHONDRIAL 2"/>
    <property type="match status" value="1"/>
</dbReference>
<dbReference type="PANTHER" id="PTHR11451">
    <property type="entry name" value="THREONINE-TRNA LIGASE"/>
    <property type="match status" value="1"/>
</dbReference>
<dbReference type="Pfam" id="PF03129">
    <property type="entry name" value="HGTP_anticodon"/>
    <property type="match status" value="1"/>
</dbReference>
<dbReference type="Pfam" id="PF02824">
    <property type="entry name" value="TGS"/>
    <property type="match status" value="1"/>
</dbReference>
<dbReference type="Pfam" id="PF00587">
    <property type="entry name" value="tRNA-synt_2b"/>
    <property type="match status" value="1"/>
</dbReference>
<dbReference type="Pfam" id="PF07973">
    <property type="entry name" value="tRNA_SAD"/>
    <property type="match status" value="1"/>
</dbReference>
<dbReference type="PRINTS" id="PR01047">
    <property type="entry name" value="TRNASYNTHTHR"/>
</dbReference>
<dbReference type="SMART" id="SM00863">
    <property type="entry name" value="tRNA_SAD"/>
    <property type="match status" value="1"/>
</dbReference>
<dbReference type="SUPFAM" id="SSF52954">
    <property type="entry name" value="Class II aaRS ABD-related"/>
    <property type="match status" value="1"/>
</dbReference>
<dbReference type="SUPFAM" id="SSF55681">
    <property type="entry name" value="Class II aaRS and biotin synthetases"/>
    <property type="match status" value="1"/>
</dbReference>
<dbReference type="SUPFAM" id="SSF81271">
    <property type="entry name" value="TGS-like"/>
    <property type="match status" value="1"/>
</dbReference>
<dbReference type="SUPFAM" id="SSF55186">
    <property type="entry name" value="ThrRS/AlaRS common domain"/>
    <property type="match status" value="1"/>
</dbReference>
<dbReference type="PROSITE" id="PS50862">
    <property type="entry name" value="AA_TRNA_LIGASE_II"/>
    <property type="match status" value="1"/>
</dbReference>
<dbReference type="PROSITE" id="PS51880">
    <property type="entry name" value="TGS"/>
    <property type="match status" value="1"/>
</dbReference>